<reference key="1">
    <citation type="journal article" date="1988" name="J. Biol. Chem.">
        <title>The nucleotide sequence of the cyd locus encoding the two subunits of the cytochrome d terminal oxidase complex of Escherichia coli.</title>
        <authorList>
            <person name="Green G.N."/>
            <person name="Fang H."/>
            <person name="Lin R.-J."/>
            <person name="Newton G."/>
            <person name="Mather M."/>
            <person name="Georgiou C.D."/>
            <person name="Gennis R.B."/>
        </authorList>
    </citation>
    <scope>NUCLEOTIDE SEQUENCE [GENOMIC DNA]</scope>
    <source>
        <strain>K12</strain>
    </source>
</reference>
<reference key="2">
    <citation type="journal article" date="1996" name="DNA Res.">
        <title>A 718-kb DNA sequence of the Escherichia coli K-12 genome corresponding to the 12.7-28.0 min region on the linkage map.</title>
        <authorList>
            <person name="Oshima T."/>
            <person name="Aiba H."/>
            <person name="Baba T."/>
            <person name="Fujita K."/>
            <person name="Hayashi K."/>
            <person name="Honjo A."/>
            <person name="Ikemoto K."/>
            <person name="Inada T."/>
            <person name="Itoh T."/>
            <person name="Kajihara M."/>
            <person name="Kanai K."/>
            <person name="Kashimoto K."/>
            <person name="Kimura S."/>
            <person name="Kitagawa M."/>
            <person name="Makino K."/>
            <person name="Masuda S."/>
            <person name="Miki T."/>
            <person name="Mizobuchi K."/>
            <person name="Mori H."/>
            <person name="Motomura K."/>
            <person name="Nakamura Y."/>
            <person name="Nashimoto H."/>
            <person name="Nishio Y."/>
            <person name="Saito N."/>
            <person name="Sampei G."/>
            <person name="Seki Y."/>
            <person name="Tagami H."/>
            <person name="Takemoto K."/>
            <person name="Wada C."/>
            <person name="Yamamoto Y."/>
            <person name="Yano M."/>
            <person name="Horiuchi T."/>
        </authorList>
    </citation>
    <scope>NUCLEOTIDE SEQUENCE [LARGE SCALE GENOMIC DNA]</scope>
    <source>
        <strain>K12 / W3110 / ATCC 27325 / DSM 5911</strain>
    </source>
</reference>
<reference key="3">
    <citation type="journal article" date="1997" name="Science">
        <title>The complete genome sequence of Escherichia coli K-12.</title>
        <authorList>
            <person name="Blattner F.R."/>
            <person name="Plunkett G. III"/>
            <person name="Bloch C.A."/>
            <person name="Perna N.T."/>
            <person name="Burland V."/>
            <person name="Riley M."/>
            <person name="Collado-Vides J."/>
            <person name="Glasner J.D."/>
            <person name="Rode C.K."/>
            <person name="Mayhew G.F."/>
            <person name="Gregor J."/>
            <person name="Davis N.W."/>
            <person name="Kirkpatrick H.A."/>
            <person name="Goeden M.A."/>
            <person name="Rose D.J."/>
            <person name="Mau B."/>
            <person name="Shao Y."/>
        </authorList>
    </citation>
    <scope>NUCLEOTIDE SEQUENCE [LARGE SCALE GENOMIC DNA]</scope>
    <source>
        <strain>K12 / MG1655 / ATCC 47076</strain>
    </source>
</reference>
<reference key="4">
    <citation type="journal article" date="2006" name="Mol. Syst. Biol.">
        <title>Highly accurate genome sequences of Escherichia coli K-12 strains MG1655 and W3110.</title>
        <authorList>
            <person name="Hayashi K."/>
            <person name="Morooka N."/>
            <person name="Yamamoto Y."/>
            <person name="Fujita K."/>
            <person name="Isono K."/>
            <person name="Choi S."/>
            <person name="Ohtsubo E."/>
            <person name="Baba T."/>
            <person name="Wanner B.L."/>
            <person name="Mori H."/>
            <person name="Horiuchi T."/>
        </authorList>
    </citation>
    <scope>NUCLEOTIDE SEQUENCE [LARGE SCALE GENOMIC DNA]</scope>
    <source>
        <strain>K12 / W3110 / ATCC 27325 / DSM 5911</strain>
    </source>
</reference>
<reference key="5">
    <citation type="journal article" date="1988" name="J. Biol. Chem.">
        <title>The active form of the cytochrome d terminal oxidase complex of Escherichia coli is a heterodimer containing one copy of each of the two subunits.</title>
        <authorList>
            <person name="Miller M.J."/>
            <person name="Hermodson M."/>
            <person name="Gennis R.B."/>
        </authorList>
    </citation>
    <scope>PROTEIN SEQUENCE OF 1-6</scope>
    <scope>FORMYLATION AT MET-1</scope>
    <scope>SUBUNIT</scope>
    <source>
        <strain>MR43L/F152</strain>
    </source>
</reference>
<reference key="6">
    <citation type="journal article" date="1983" name="J. Biol. Chem.">
        <title>The purification and characterization of the cytochrome d terminal oxidase complex of the Escherichia coli aerobic respiratory chain.</title>
        <authorList>
            <person name="Miller M.J."/>
            <person name="Gennis R.B."/>
        </authorList>
    </citation>
    <scope>FUNCTION AS AN OXIDASE</scope>
    <scope>BIOPHYSICOCHEMICAL PROPERTIES</scope>
    <scope>ACTIVITY REGULATION</scope>
    <scope>COFACTOR</scope>
    <scope>SUBUNIT</scope>
    <scope>INDUCTION</scope>
    <source>
        <strain>MR43L/F152</strain>
    </source>
</reference>
<reference key="7">
    <citation type="journal article" date="1986" name="Biochemistry">
        <title>Specific overproduction and purification of the cytochrome b558 component of the cytochrome d complex from Escherichia coli.</title>
        <authorList>
            <person name="Green G.N."/>
            <person name="Lorence R.M."/>
            <person name="Gennis R.B."/>
        </authorList>
    </citation>
    <scope>COFACTOR</scope>
</reference>
<reference key="8">
    <citation type="journal article" date="1986" name="Biochemistry">
        <title>Coulometric and spectroscopic analysis of the purified cytochrome d complex of Escherichia coli: evidence for the identification of 'cytochrome a1' as cytochrome b595.</title>
        <authorList>
            <person name="Lorence R.M."/>
            <person name="Koland J.G."/>
            <person name="Gennis R.B."/>
        </authorList>
    </citation>
    <scope>COFACTOR</scope>
    <source>
        <strain>MR43L/F152</strain>
    </source>
</reference>
<reference key="9">
    <citation type="journal article" date="1988" name="J. Biol. Chem.">
        <title>Beta-galactosidase gene fusions as probes for the cytoplasmic regions of subunits I and II of the membrane-bound cytochrome d terminal oxidase from Escherichia coli.</title>
        <authorList>
            <person name="Georgiou C.D."/>
            <person name="Dueweke T.J."/>
            <person name="Gennis R.B."/>
        </authorList>
    </citation>
    <scope>TOPOLOGY</scope>
</reference>
<reference key="10">
    <citation type="journal article" date="1989" name="J. Biol. Chem.">
        <title>Location of heme axial ligands in the cytochrome d terminal oxidase complex of Escherichia coli determined by site-directed mutagenesis.</title>
        <authorList>
            <person name="Fang H."/>
            <person name="Lin R.J."/>
            <person name="Gennis R.B."/>
        </authorList>
    </citation>
    <scope>FUNCTION</scope>
    <scope>COFACTOR</scope>
    <scope>MUTAGENESIS OF HIS-19; HIS-86; HIS-126; HIS-186; HIS-314 AND HIS-510</scope>
</reference>
<reference key="11">
    <citation type="journal article" date="1990" name="J. Biol. Chem.">
        <title>Epitopes of monoclonal antibodies which inhibit ubiquinol oxidase activity of Escherichia coli cytochrome d complex localize functional domain.</title>
        <authorList>
            <person name="Dueweke T.J."/>
            <person name="Gennis R.B."/>
        </authorList>
    </citation>
    <scope>DOMAINS</scope>
</reference>
<reference key="12">
    <citation type="journal article" date="1991" name="Biochemistry">
        <title>Properties of the two terminal oxidases of Escherichia coli.</title>
        <authorList>
            <person name="Puustinen A."/>
            <person name="Finel M."/>
            <person name="Haltia T."/>
            <person name="Gennis R.B."/>
            <person name="Wikstroem M."/>
        </authorList>
    </citation>
    <scope>CATALYTIC ACTIVITY</scope>
</reference>
<reference key="13">
    <citation type="journal article" date="1991" name="Mol. Microbiol.">
        <title>Analysis of the topology of the cytochrome d terminal oxidase complex of Escherichia coli by alkaline phosphatase fusions.</title>
        <authorList>
            <person name="Newton G."/>
            <person name="Yun C.H."/>
            <person name="Gennis R.B."/>
        </authorList>
    </citation>
    <scope>TOPOLOGY</scope>
</reference>
<reference key="14">
    <citation type="journal article" date="1995" name="Biochemistry">
        <title>Methionine-393 is an axial ligand of the heme b558 component of the cytochrome bd ubiquinol oxidase from Escherichia coli.</title>
        <authorList>
            <person name="Kaysser T.M."/>
            <person name="Ghaim J.B."/>
            <person name="Georgiou C."/>
            <person name="Gennis R.B."/>
        </authorList>
    </citation>
    <scope>FUNCTION</scope>
    <scope>COFACTOR</scope>
    <scope>MUTAGENESIS OF MET-393</scope>
</reference>
<reference key="15">
    <citation type="journal article" date="2004" name="FEBS Lett.">
        <title>Gene fusions with beta-lactamase show that subunit I of the cytochrome bd quinol oxidase from E. coli has nine transmembrane helices with the O2 reactive site near the periplasmic surface.</title>
        <authorList>
            <person name="Zhang J."/>
            <person name="Barquera B."/>
            <person name="Gennis R.B."/>
        </authorList>
    </citation>
    <scope>SUBCELLULAR LOCATION</scope>
    <scope>TOPOLOGY</scope>
</reference>
<reference key="16">
    <citation type="journal article" date="2005" name="J. Biol. Chem.">
        <title>Protein complexes of the Escherichia coli cell envelope.</title>
        <authorList>
            <person name="Stenberg F."/>
            <person name="Chovanec P."/>
            <person name="Maslen S.L."/>
            <person name="Robinson C.V."/>
            <person name="Ilag L."/>
            <person name="von Heijne G."/>
            <person name="Daley D.O."/>
        </authorList>
    </citation>
    <scope>SUBUNIT</scope>
    <scope>SUBCELLULAR LOCATION</scope>
    <source>
        <strain>BL21-DE3</strain>
    </source>
</reference>
<reference key="17">
    <citation type="journal article" date="2005" name="Science">
        <title>Global topology analysis of the Escherichia coli inner membrane proteome.</title>
        <authorList>
            <person name="Daley D.O."/>
            <person name="Rapp M."/>
            <person name="Granseth E."/>
            <person name="Melen K."/>
            <person name="Drew D."/>
            <person name="von Heijne G."/>
        </authorList>
    </citation>
    <scope>TOPOLOGY [LARGE SCALE ANALYSIS]</scope>
    <source>
        <strain>K12 / MG1655 / ATCC 47076</strain>
    </source>
</reference>
<reference key="18">
    <citation type="journal article" date="2009" name="J. Bacteriol.">
        <title>Respiration of Escherichia coli can be fully uncoupled via the nonelectrogenic terminal cytochrome bd-II oxidase.</title>
        <authorList>
            <person name="Bekker M."/>
            <person name="de Vries S."/>
            <person name="Ter Beek A."/>
            <person name="Hellingwerf K.J."/>
            <person name="de Mattos M.J."/>
        </authorList>
    </citation>
    <scope>FUNCTION IN PROTON TRANSLOCATION</scope>
    <scope>DISRUPTION PHENOTYPE</scope>
    <source>
        <strain>K12</strain>
    </source>
</reference>
<reference key="19">
    <citation type="journal article" date="2011" name="Proc. Natl. Acad. Sci. U.S.A.">
        <title>Aerobic respiratory chain of Escherichia coli is not allowed to work in fully uncoupled mode.</title>
        <authorList>
            <person name="Borisov V.B."/>
            <person name="Murali R."/>
            <person name="Verkhovskaya M.L."/>
            <person name="Bloch D.A."/>
            <person name="Han H."/>
            <person name="Gennis R.B."/>
            <person name="Verkhovsky M.I."/>
        </authorList>
    </citation>
    <scope>FUNCTION IN PROTON TRANSLOCATION</scope>
    <scope>DISRUPTION PHENOTYPE</scope>
    <source>
        <strain>K12</strain>
    </source>
</reference>
<reference key="20">
    <citation type="journal article" date="2013" name="J. Bacteriol.">
        <title>The Escherichia coli CydX protein is a member of the CydAB cytochrome bd oxidase complex and is required for cytochrome bd oxidase activity.</title>
        <authorList>
            <person name="Vanorsdel C.E."/>
            <person name="Bhatt S."/>
            <person name="Allen R.J."/>
            <person name="Brenner E.P."/>
            <person name="Hobson J.J."/>
            <person name="Jamil A."/>
            <person name="Haynes B.M."/>
            <person name="Genson A.M."/>
            <person name="Hemm M.R."/>
        </authorList>
    </citation>
    <scope>PROBABLE INTERACTION WITH CYDX</scope>
    <scope>POSSIBLE INTERACTION WITH APPX</scope>
    <scope>SUBUNIT</scope>
    <scope>DISRUPTION PHENOTYPE</scope>
    <source>
        <strain>K12 / MG1655 / ATCC 47076</strain>
    </source>
</reference>
<reference key="21">
    <citation type="journal article" date="2015" name="Proteomics">
        <title>Proteome-wide analysis of the amino terminal status of Escherichia coli proteins at the steady-state and upon deformylation inhibition.</title>
        <authorList>
            <person name="Bienvenut W.V."/>
            <person name="Giglione C."/>
            <person name="Meinnel T."/>
        </authorList>
    </citation>
    <scope>FORMYLATION AT MET-1</scope>
    <source>
        <strain>K12 / CAG12184</strain>
    </source>
</reference>
<reference key="22">
    <citation type="journal article" date="2011" name="Biochim. Biophys. Acta">
        <title>The cytochrome bd respiratory oxygen reductases.</title>
        <authorList>
            <person name="Borisov V.B."/>
            <person name="Gennis R.B."/>
            <person name="Hemp J."/>
            <person name="Verkhovsky M.I."/>
        </authorList>
    </citation>
    <scope>REVIEW</scope>
</reference>
<accession>P0ABJ9</accession>
<accession>P11026</accession>
<accession>P75754</accession>
<accession>P76823</accession>
<evidence type="ECO:0000255" key="1"/>
<evidence type="ECO:0000269" key="2">
    <source>
    </source>
</evidence>
<evidence type="ECO:0000269" key="3">
    <source>
    </source>
</evidence>
<evidence type="ECO:0000269" key="4">
    <source>
    </source>
</evidence>
<evidence type="ECO:0000269" key="5">
    <source>
    </source>
</evidence>
<evidence type="ECO:0000269" key="6">
    <source>
    </source>
</evidence>
<evidence type="ECO:0000269" key="7">
    <source>
    </source>
</evidence>
<evidence type="ECO:0000269" key="8">
    <source>
    </source>
</evidence>
<evidence type="ECO:0000269" key="9">
    <source>
    </source>
</evidence>
<evidence type="ECO:0000269" key="10">
    <source>
    </source>
</evidence>
<evidence type="ECO:0000269" key="11">
    <source>
    </source>
</evidence>
<evidence type="ECO:0000269" key="12">
    <source>
    </source>
</evidence>
<evidence type="ECO:0000269" key="13">
    <source>
    </source>
</evidence>
<evidence type="ECO:0000269" key="14">
    <source>
    </source>
</evidence>
<evidence type="ECO:0000305" key="15"/>
<evidence type="ECO:0007829" key="16">
    <source>
        <dbReference type="PDB" id="6RKO"/>
    </source>
</evidence>
<evidence type="ECO:0007829" key="17">
    <source>
        <dbReference type="PDB" id="6RX4"/>
    </source>
</evidence>
<organism>
    <name type="scientific">Escherichia coli (strain K12)</name>
    <dbReference type="NCBI Taxonomy" id="83333"/>
    <lineage>
        <taxon>Bacteria</taxon>
        <taxon>Pseudomonadati</taxon>
        <taxon>Pseudomonadota</taxon>
        <taxon>Gammaproteobacteria</taxon>
        <taxon>Enterobacterales</taxon>
        <taxon>Enterobacteriaceae</taxon>
        <taxon>Escherichia</taxon>
    </lineage>
</organism>
<gene>
    <name type="primary">cydA</name>
    <name type="synonym">cyd-1</name>
    <name type="ordered locus">b0733</name>
    <name type="ordered locus">JW0722</name>
</gene>
<dbReference type="EC" id="7.1.1.7" evidence="4 13"/>
<dbReference type="EMBL" id="J03939">
    <property type="protein sequence ID" value="AAA18804.1"/>
    <property type="molecule type" value="Unassigned_DNA"/>
</dbReference>
<dbReference type="EMBL" id="U00096">
    <property type="protein sequence ID" value="AAC73827.2"/>
    <property type="molecule type" value="Genomic_DNA"/>
</dbReference>
<dbReference type="EMBL" id="AP009048">
    <property type="protein sequence ID" value="BAA35399.1"/>
    <property type="molecule type" value="Genomic_DNA"/>
</dbReference>
<dbReference type="RefSeq" id="NP_415261.2">
    <property type="nucleotide sequence ID" value="NC_000913.3"/>
</dbReference>
<dbReference type="RefSeq" id="WP_000884361.1">
    <property type="nucleotide sequence ID" value="NZ_SSZK01000033.1"/>
</dbReference>
<dbReference type="PDB" id="6RKO">
    <property type="method" value="EM"/>
    <property type="resolution" value="2.68 A"/>
    <property type="chains" value="A=1-522"/>
</dbReference>
<dbReference type="PDB" id="6RX4">
    <property type="method" value="EM"/>
    <property type="resolution" value="3.30 A"/>
    <property type="chains" value="A=1-522"/>
</dbReference>
<dbReference type="PDBsum" id="6RKO"/>
<dbReference type="PDBsum" id="6RX4"/>
<dbReference type="EMDB" id="EMD-10049"/>
<dbReference type="EMDB" id="EMD-4908"/>
<dbReference type="SMR" id="P0ABJ9"/>
<dbReference type="BioGRID" id="4263539">
    <property type="interactions" value="372"/>
</dbReference>
<dbReference type="ComplexPortal" id="CPX-268">
    <property type="entry name" value="Cytochrome bd-I ubiquinol oxidase complex"/>
</dbReference>
<dbReference type="DIP" id="DIP-36181N"/>
<dbReference type="FunCoup" id="P0ABJ9">
    <property type="interactions" value="447"/>
</dbReference>
<dbReference type="IntAct" id="P0ABJ9">
    <property type="interactions" value="4"/>
</dbReference>
<dbReference type="MINT" id="P0ABJ9"/>
<dbReference type="STRING" id="511145.b0733"/>
<dbReference type="TCDB" id="3.D.4.3.2">
    <property type="family name" value="the proton-translocating cytochrome oxidase (cox) superfamily"/>
</dbReference>
<dbReference type="jPOST" id="P0ABJ9"/>
<dbReference type="PaxDb" id="511145-b0733"/>
<dbReference type="EnsemblBacteria" id="AAC73827">
    <property type="protein sequence ID" value="AAC73827"/>
    <property type="gene ID" value="b0733"/>
</dbReference>
<dbReference type="GeneID" id="93776752"/>
<dbReference type="GeneID" id="945341"/>
<dbReference type="KEGG" id="ecj:JW0722"/>
<dbReference type="KEGG" id="eco:b0733"/>
<dbReference type="KEGG" id="ecoc:C3026_03675"/>
<dbReference type="PATRIC" id="fig|1411691.4.peg.1540"/>
<dbReference type="EchoBASE" id="EB0170"/>
<dbReference type="eggNOG" id="COG1271">
    <property type="taxonomic scope" value="Bacteria"/>
</dbReference>
<dbReference type="HOGENOM" id="CLU_030555_3_3_6"/>
<dbReference type="InParanoid" id="P0ABJ9"/>
<dbReference type="OMA" id="TLARWQF"/>
<dbReference type="OrthoDB" id="9807042at2"/>
<dbReference type="PhylomeDB" id="P0ABJ9"/>
<dbReference type="BioCyc" id="EcoCyc:CYDA-MONOMER"/>
<dbReference type="BioCyc" id="MetaCyc:CYDA-MONOMER"/>
<dbReference type="BRENDA" id="7.1.1.7">
    <property type="organism ID" value="2026"/>
</dbReference>
<dbReference type="UniPathway" id="UPA00705"/>
<dbReference type="PRO" id="PR:P0ABJ9"/>
<dbReference type="Proteomes" id="UP000000625">
    <property type="component" value="Chromosome"/>
</dbReference>
<dbReference type="GO" id="GO:0070069">
    <property type="term" value="C:cytochrome complex"/>
    <property type="evidence" value="ECO:0000314"/>
    <property type="project" value="ComplexPortal"/>
</dbReference>
<dbReference type="GO" id="GO:0016020">
    <property type="term" value="C:membrane"/>
    <property type="evidence" value="ECO:0000314"/>
    <property type="project" value="ComplexPortal"/>
</dbReference>
<dbReference type="GO" id="GO:0005886">
    <property type="term" value="C:plasma membrane"/>
    <property type="evidence" value="ECO:0000314"/>
    <property type="project" value="EcoCyc"/>
</dbReference>
<dbReference type="GO" id="GO:0009055">
    <property type="term" value="F:electron transfer activity"/>
    <property type="evidence" value="ECO:0000314"/>
    <property type="project" value="EcoCyc"/>
</dbReference>
<dbReference type="GO" id="GO:0020037">
    <property type="term" value="F:heme binding"/>
    <property type="evidence" value="ECO:0000314"/>
    <property type="project" value="EcoCyc"/>
</dbReference>
<dbReference type="GO" id="GO:0046872">
    <property type="term" value="F:metal ion binding"/>
    <property type="evidence" value="ECO:0007669"/>
    <property type="project" value="UniProtKB-KW"/>
</dbReference>
<dbReference type="GO" id="GO:0016679">
    <property type="term" value="F:oxidoreductase activity, acting on diphenols and related substances as donors"/>
    <property type="evidence" value="ECO:0000314"/>
    <property type="project" value="EcoCyc"/>
</dbReference>
<dbReference type="GO" id="GO:0016682">
    <property type="term" value="F:oxidoreductase activity, acting on diphenols and related substances as donors, oxygen as acceptor"/>
    <property type="evidence" value="ECO:0000318"/>
    <property type="project" value="GO_Central"/>
</dbReference>
<dbReference type="GO" id="GO:0019646">
    <property type="term" value="P:aerobic electron transport chain"/>
    <property type="evidence" value="ECO:0000314"/>
    <property type="project" value="EcoCyc"/>
</dbReference>
<dbReference type="GO" id="GO:0006119">
    <property type="term" value="P:oxidative phosphorylation"/>
    <property type="evidence" value="ECO:0000303"/>
    <property type="project" value="ComplexPortal"/>
</dbReference>
<dbReference type="InterPro" id="IPR002585">
    <property type="entry name" value="Cyt-d_ubiquinol_oxidase_su_1"/>
</dbReference>
<dbReference type="NCBIfam" id="NF011677">
    <property type="entry name" value="PRK15097.1"/>
    <property type="match status" value="1"/>
</dbReference>
<dbReference type="PANTHER" id="PTHR30365:SF0">
    <property type="entry name" value="CYTOCHROME BD-I UBIQUINOL OXIDASE SUBUNIT 1"/>
    <property type="match status" value="1"/>
</dbReference>
<dbReference type="PANTHER" id="PTHR30365">
    <property type="entry name" value="CYTOCHROME D UBIQUINOL OXIDASE"/>
    <property type="match status" value="1"/>
</dbReference>
<dbReference type="Pfam" id="PF01654">
    <property type="entry name" value="Cyt_bd_oxida_I"/>
    <property type="match status" value="1"/>
</dbReference>
<dbReference type="PIRSF" id="PIRSF006446">
    <property type="entry name" value="Cyt_quinol_oxidase_1"/>
    <property type="match status" value="1"/>
</dbReference>
<protein>
    <recommendedName>
        <fullName>Cytochrome bd-I ubiquinol oxidase subunit 1</fullName>
        <ecNumber evidence="4 13">7.1.1.7</ecNumber>
    </recommendedName>
    <alternativeName>
        <fullName>Cytochrome bd-I oxidase subunit I</fullName>
    </alternativeName>
    <alternativeName>
        <fullName>Cytochrome d ubiquinol oxidase subunit I</fullName>
    </alternativeName>
</protein>
<proteinExistence type="evidence at protein level"/>
<keyword id="KW-0002">3D-structure</keyword>
<keyword id="KW-0997">Cell inner membrane</keyword>
<keyword id="KW-1003">Cell membrane</keyword>
<keyword id="KW-0903">Direct protein sequencing</keyword>
<keyword id="KW-0249">Electron transport</keyword>
<keyword id="KW-0291">Formylation</keyword>
<keyword id="KW-0349">Heme</keyword>
<keyword id="KW-0408">Iron</keyword>
<keyword id="KW-0472">Membrane</keyword>
<keyword id="KW-0479">Metal-binding</keyword>
<keyword id="KW-1185">Reference proteome</keyword>
<keyword id="KW-1278">Translocase</keyword>
<keyword id="KW-0812">Transmembrane</keyword>
<keyword id="KW-1133">Transmembrane helix</keyword>
<keyword id="KW-0813">Transport</keyword>
<sequence length="522" mass="58205">MLDIVELSRLQFALTAMYHFLFVPLTLGMAFLLAIMETVYVLSGKQIYKDMTKFWGKLFGINFALGVATGLTMEFQFGTNWSYYSHYVGDIFGAPLAIEGLMAFFLESTFVGLFFFGWDRLGKVQHMCVTWLVALGSNLSALWILVANGWMQNPIASDFNFETMRMEMVSFSELVLNPVAQVKFVHTVASGYVTGAMFILGISAWYMLKGRDFAFAKRSFAIAASFGMAAVLSVIVLGDESGYEMGDVQKTKLAAIEAEWETQPAPAAFTLFGIPDQEEETNKFAIQIPYALGIIATRSVDTPVIGLKELMVQHEERIRNGMKAYSLLEQLRSGSTDQAVRDQFNSMKKDLGYGLLLKRYTPNVADATEAQIQQATKDSIPRVAPLYFAFRIMVACGFLLLAIIALSFWSVIRNRIGEKKWLLRAALYGIPLPWIAVEAGWFVAEYGRQPWAIGEVLPTAVANSSLTAGDLIFSMVLICGLYTLFLVAELFLMFKFARLGPSSLKTGRYHFEQSSTTTQPAR</sequence>
<name>CYDA_ECOLI</name>
<feature type="chain" id="PRO_0000183919" description="Cytochrome bd-I ubiquinol oxidase subunit 1">
    <location>
        <begin position="1"/>
        <end position="522"/>
    </location>
</feature>
<feature type="topological domain" description="Periplasmic" evidence="15">
    <location>
        <begin position="1"/>
        <end position="15"/>
    </location>
</feature>
<feature type="transmembrane region" description="Helical" evidence="15">
    <location>
        <begin position="16"/>
        <end position="35"/>
    </location>
</feature>
<feature type="topological domain" description="Cytoplasmic" evidence="15">
    <location>
        <begin position="36"/>
        <end position="54"/>
    </location>
</feature>
<feature type="transmembrane region" description="Helical" evidence="15">
    <location>
        <begin position="55"/>
        <end position="69"/>
    </location>
</feature>
<feature type="topological domain" description="Periplasmic" evidence="15">
    <location>
        <begin position="70"/>
        <end position="96"/>
    </location>
</feature>
<feature type="transmembrane region" description="Helical" evidence="15">
    <location>
        <begin position="97"/>
        <end position="114"/>
    </location>
</feature>
<feature type="topological domain" description="Cytoplasmic" evidence="15">
    <location>
        <begin position="115"/>
        <end position="128"/>
    </location>
</feature>
<feature type="transmembrane region" description="Helical" evidence="15">
    <location>
        <begin position="129"/>
        <end position="146"/>
    </location>
</feature>
<feature type="topological domain" description="Periplasmic" evidence="15">
    <location>
        <begin position="147"/>
        <end position="186"/>
    </location>
</feature>
<feature type="transmembrane region" description="Helical" evidence="15">
    <location>
        <begin position="187"/>
        <end position="203"/>
    </location>
</feature>
<feature type="topological domain" description="Cytoplasmic" evidence="15">
    <location>
        <begin position="204"/>
        <end position="219"/>
    </location>
</feature>
<feature type="transmembrane region" description="Helical" evidence="15">
    <location>
        <begin position="220"/>
        <end position="235"/>
    </location>
</feature>
<feature type="topological domain" description="Periplasmic" evidence="15">
    <location>
        <begin position="236"/>
        <end position="390"/>
    </location>
</feature>
<feature type="transmembrane region" description="Helical" evidence="15">
    <location>
        <begin position="391"/>
        <end position="407"/>
    </location>
</feature>
<feature type="topological domain" description="Cytoplasmic" evidence="15">
    <location>
        <begin position="408"/>
        <end position="423"/>
    </location>
</feature>
<feature type="transmembrane region" description="Helical" evidence="15">
    <location>
        <begin position="424"/>
        <end position="441"/>
    </location>
</feature>
<feature type="topological domain" description="Periplasmic" evidence="15">
    <location>
        <begin position="442"/>
        <end position="472"/>
    </location>
</feature>
<feature type="transmembrane region" description="Helical" evidence="15">
    <location>
        <begin position="473"/>
        <end position="487"/>
    </location>
</feature>
<feature type="topological domain" description="Cytoplasmic" evidence="15">
    <location>
        <begin position="488"/>
        <end position="522"/>
    </location>
</feature>
<feature type="binding site" description="axial binding residue" evidence="1">
    <location>
        <position position="19"/>
    </location>
    <ligand>
        <name>heme b</name>
        <dbReference type="ChEBI" id="CHEBI:60344"/>
        <label>b595</label>
    </ligand>
    <ligandPart>
        <name>Fe</name>
        <dbReference type="ChEBI" id="CHEBI:18248"/>
    </ligandPart>
</feature>
<feature type="binding site" description="axial binding residue">
    <location>
        <position position="186"/>
    </location>
    <ligand>
        <name>heme b</name>
        <dbReference type="ChEBI" id="CHEBI:60344"/>
        <label>b558</label>
    </ligand>
    <ligandPart>
        <name>Fe</name>
        <dbReference type="ChEBI" id="CHEBI:18248"/>
    </ligandPart>
</feature>
<feature type="binding site" description="axial binding residue">
    <location>
        <position position="393"/>
    </location>
    <ligand>
        <name>heme b</name>
        <dbReference type="ChEBI" id="CHEBI:60344"/>
        <label>b558</label>
    </ligand>
    <ligandPart>
        <name>Fe</name>
        <dbReference type="ChEBI" id="CHEBI:18248"/>
    </ligandPart>
</feature>
<feature type="modified residue" description="N-formylmethionine" evidence="8 12">
    <location>
        <position position="1"/>
    </location>
</feature>
<feature type="mutagenesis site" description="Loss of cytochrome b595 and heme d, no aerobic growth, complex assembles." evidence="9">
    <original>H</original>
    <variation>L</variation>
    <variation>R</variation>
    <location>
        <position position="19"/>
    </location>
</feature>
<feature type="mutagenesis site" description="No effect." evidence="9">
    <original>H</original>
    <variation>R</variation>
    <location>
        <position position="86"/>
    </location>
</feature>
<feature type="mutagenesis site" description="Loss of all cofactors, no aerobic growth, complex assembles." evidence="9">
    <original>H</original>
    <variation>P</variation>
    <location>
        <position position="126"/>
    </location>
</feature>
<feature type="mutagenesis site" description="No effect." evidence="9">
    <original>H</original>
    <variation>R</variation>
    <location>
        <position position="126"/>
    </location>
</feature>
<feature type="mutagenesis site" description="Loss of cytochrome b558, no aerobic growth, complex assembles, this subunit is more susceptible to proteolysis." evidence="9">
    <original>H</original>
    <variation>L</variation>
    <location>
        <position position="186"/>
    </location>
</feature>
<feature type="mutagenesis site" description="Grows aerobically, has altered cytochrome b/d ratio, complex assembles." evidence="9">
    <original>H</original>
    <variation>L</variation>
    <location>
        <position position="314"/>
    </location>
</feature>
<feature type="mutagenesis site" description="Loss of cytochrome b595 and heme d, no aerobic growth, loss of complex." evidence="9">
    <original>H</original>
    <variation>P</variation>
    <location>
        <position position="314"/>
    </location>
</feature>
<feature type="mutagenesis site" description="Cytochrome b558 shifts to a high spin configuration, complex assembles. Retains about 1% quinol oxidoreductase activity after purification.">
    <original>M</original>
    <variation>L</variation>
    <location>
        <position position="393"/>
    </location>
</feature>
<feature type="mutagenesis site" description="No effect." evidence="9">
    <original>H</original>
    <variation>L</variation>
    <location>
        <position position="510"/>
    </location>
</feature>
<feature type="sequence conflict" description="In Ref. 1; AAA18804." evidence="15" ref="1">
    <original>F</original>
    <variation>L</variation>
    <location>
        <position position="213"/>
    </location>
</feature>
<feature type="helix" evidence="16">
    <location>
        <begin position="4"/>
        <end position="19"/>
    </location>
</feature>
<feature type="turn" evidence="16">
    <location>
        <begin position="20"/>
        <end position="22"/>
    </location>
</feature>
<feature type="helix" evidence="16">
    <location>
        <begin position="23"/>
        <end position="43"/>
    </location>
</feature>
<feature type="helix" evidence="16">
    <location>
        <begin position="47"/>
        <end position="79"/>
    </location>
</feature>
<feature type="helix" evidence="16">
    <location>
        <begin position="82"/>
        <end position="102"/>
    </location>
</feature>
<feature type="helix" evidence="16">
    <location>
        <begin position="104"/>
        <end position="116"/>
    </location>
</feature>
<feature type="turn" evidence="16">
    <location>
        <begin position="118"/>
        <end position="120"/>
    </location>
</feature>
<feature type="helix" evidence="16">
    <location>
        <begin position="123"/>
        <end position="152"/>
    </location>
</feature>
<feature type="strand" evidence="16">
    <location>
        <begin position="156"/>
        <end position="160"/>
    </location>
</feature>
<feature type="turn" evidence="16">
    <location>
        <begin position="161"/>
        <end position="164"/>
    </location>
</feature>
<feature type="strand" evidence="16">
    <location>
        <begin position="165"/>
        <end position="169"/>
    </location>
</feature>
<feature type="helix" evidence="16">
    <location>
        <begin position="171"/>
        <end position="175"/>
    </location>
</feature>
<feature type="helix" evidence="16">
    <location>
        <begin position="178"/>
        <end position="209"/>
    </location>
</feature>
<feature type="helix" evidence="16">
    <location>
        <begin position="213"/>
        <end position="236"/>
    </location>
</feature>
<feature type="helix" evidence="16">
    <location>
        <begin position="250"/>
        <end position="256"/>
    </location>
</feature>
<feature type="helix" evidence="16">
    <location>
        <begin position="312"/>
        <end position="332"/>
    </location>
</feature>
<feature type="helix" evidence="16">
    <location>
        <begin position="341"/>
        <end position="345"/>
    </location>
</feature>
<feature type="helix" evidence="16">
    <location>
        <begin position="348"/>
        <end position="350"/>
    </location>
</feature>
<feature type="helix" evidence="16">
    <location>
        <begin position="351"/>
        <end position="354"/>
    </location>
</feature>
<feature type="helix" evidence="16">
    <location>
        <begin position="355"/>
        <end position="357"/>
    </location>
</feature>
<feature type="turn" evidence="16">
    <location>
        <begin position="358"/>
        <end position="360"/>
    </location>
</feature>
<feature type="strand" evidence="17">
    <location>
        <begin position="361"/>
        <end position="363"/>
    </location>
</feature>
<feature type="helix" evidence="16">
    <location>
        <begin position="364"/>
        <end position="366"/>
    </location>
</feature>
<feature type="helix" evidence="16">
    <location>
        <begin position="369"/>
        <end position="377"/>
    </location>
</feature>
<feature type="helix" evidence="16">
    <location>
        <begin position="383"/>
        <end position="412"/>
    </location>
</feature>
<feature type="strand" evidence="17">
    <location>
        <begin position="416"/>
        <end position="418"/>
    </location>
</feature>
<feature type="helix" evidence="16">
    <location>
        <begin position="420"/>
        <end position="428"/>
    </location>
</feature>
<feature type="helix" evidence="16">
    <location>
        <begin position="431"/>
        <end position="445"/>
    </location>
</feature>
<feature type="turn" evidence="16">
    <location>
        <begin position="446"/>
        <end position="450"/>
    </location>
</feature>
<feature type="strand" evidence="16">
    <location>
        <begin position="451"/>
        <end position="453"/>
    </location>
</feature>
<feature type="turn" evidence="16">
    <location>
        <begin position="454"/>
        <end position="456"/>
    </location>
</feature>
<feature type="helix" evidence="16">
    <location>
        <begin position="459"/>
        <end position="462"/>
    </location>
</feature>
<feature type="helix" evidence="16">
    <location>
        <begin position="468"/>
        <end position="499"/>
    </location>
</feature>
<feature type="helix" evidence="16">
    <location>
        <begin position="500"/>
        <end position="504"/>
    </location>
</feature>
<feature type="helix" evidence="16">
    <location>
        <begin position="510"/>
        <end position="512"/>
    </location>
</feature>
<comment type="function">
    <text evidence="5 6 9 13 14">A terminal oxidase that produces a proton motive force by the vectorial transfer of protons across the inner membrane. It is the component of the aerobic respiratory chain of E.coli that predominates when cells are grown at low aeration. Generates a proton motive force using protons and electrons from opposite sides of the membrane to generate H(2)O, transferring 1 proton/electron.</text>
</comment>
<comment type="catalytic activity">
    <reaction evidence="4 13">
        <text>2 a ubiquinol + O2(in) + 4 H(+)(in) = 2 a ubiquinone + 2 H2O(in) + 4 H(+)(out)</text>
        <dbReference type="Rhea" id="RHEA:40527"/>
        <dbReference type="Rhea" id="RHEA-COMP:9565"/>
        <dbReference type="Rhea" id="RHEA-COMP:9566"/>
        <dbReference type="ChEBI" id="CHEBI:15377"/>
        <dbReference type="ChEBI" id="CHEBI:15378"/>
        <dbReference type="ChEBI" id="CHEBI:15379"/>
        <dbReference type="ChEBI" id="CHEBI:16389"/>
        <dbReference type="ChEBI" id="CHEBI:17976"/>
        <dbReference type="EC" id="7.1.1.7"/>
    </reaction>
</comment>
<comment type="cofactor">
    <cofactor evidence="9 10 11 13 14">
        <name>heme b</name>
        <dbReference type="ChEBI" id="CHEBI:60344"/>
    </cofactor>
    <text evidence="9 10 11 13 14">Binds 1 protoheme IX center (heme b558) per subunit.</text>
</comment>
<comment type="cofactor">
    <cofactor evidence="9 10 11 13 14">
        <name>heme b</name>
        <dbReference type="ChEBI" id="CHEBI:60344"/>
    </cofactor>
    <text evidence="9 10 11 13 14">Binds 1 protoheme IX center (heme b595, originally called cytochrome a1) per heterodimer, in conjunction with CydB.</text>
</comment>
<comment type="cofactor">
    <cofactor evidence="9 10 11 13 14">
        <name>heme d cis-diol</name>
        <dbReference type="ChEBI" id="CHEBI:62814"/>
    </cofactor>
    <text evidence="9 10 11 13 14">Binds 1 iron-chlorin (heme d or cytochrome d) per heterodimer, in conjunction with CydB.</text>
</comment>
<comment type="activity regulation">
    <text evidence="13">90% inhibited by cyanide and 2-heptyl-4-hydroxyquinoline N-oxide, at 1 mM and 40 uM respectively.</text>
</comment>
<comment type="biophysicochemical properties">
    <kinetics>
        <KM evidence="13">0.1 mM for ubiquinol-1</KM>
        <KM evidence="13">0.28 mM for 2,3,5,6-tetramethyl-p-phenylenediamine</KM>
        <KM evidence="13">0.68 mM for N,N,N',N'-tetramethyl-p-phenylenediamine</KM>
        <Vmax evidence="13">383.0 umol/min/mg enzyme for ubiquinol-1</Vmax>
        <Vmax evidence="13">270.0 umol/min/mg enzyme for 2,3,5,6-tetramethyl-p-phenylenediamine</Vmax>
        <Vmax evidence="13">126.0 umol/min/mg enzyme for N,N,N',N'-tetramethyl-p-phenylenediamine</Vmax>
        <text>pH 7.0, 37 degrees Celsius.</text>
    </kinetics>
</comment>
<comment type="pathway">
    <text>Energy metabolism; oxidative phosphorylation.</text>
</comment>
<comment type="subunit">
    <text evidence="3 7 12 13">Heterodimer of subunits I and II. Probably interacts with CydX, and overexpressed AppX.</text>
</comment>
<comment type="interaction">
    <interactant intactId="EBI-906928">
        <id>P0ABJ9</id>
    </interactant>
    <interactant intactId="EBI-1213195">
        <id>P0ABK2</id>
        <label>cydB</label>
    </interactant>
    <organismsDiffer>false</organismsDiffer>
    <experiments>5</experiments>
</comment>
<comment type="subcellular location">
    <subcellularLocation>
        <location evidence="2 3">Cell inner membrane</location>
        <topology evidence="2 3">Multi-pass membrane protein</topology>
    </subcellularLocation>
</comment>
<comment type="induction">
    <text evidence="13">Under conditions of low aeration, in stationary phase (at protein level).</text>
</comment>
<comment type="PTM">
    <text evidence="8 12">86% of isolated protein was N-formylated.</text>
</comment>
<comment type="disruption phenotype">
    <text evidence="5 6 7">A double cydA/cydB deletion shows increased sensitivity to reductant (beta-mercapoethanol).</text>
</comment>
<comment type="similarity">
    <text evidence="15">Belongs to the cytochrome ubiquinol oxidase subunit 1 family.</text>
</comment>